<feature type="initiator methionine" description="Removed" evidence="1">
    <location>
        <position position="1"/>
    </location>
</feature>
<feature type="chain" id="PRO_0000128348" description="T-complex protein 1 subunit epsilon">
    <location>
        <begin position="2"/>
        <end position="541"/>
    </location>
</feature>
<feature type="binding site" evidence="1">
    <location>
        <position position="53"/>
    </location>
    <ligand>
        <name>ADP</name>
        <dbReference type="ChEBI" id="CHEBI:456216"/>
    </ligand>
</feature>
<feature type="binding site" evidence="1">
    <location>
        <position position="53"/>
    </location>
    <ligand>
        <name>ATP</name>
        <dbReference type="ChEBI" id="CHEBI:30616"/>
    </ligand>
</feature>
<feature type="binding site" evidence="1">
    <location>
        <position position="104"/>
    </location>
    <ligand>
        <name>Mg(2+)</name>
        <dbReference type="ChEBI" id="CHEBI:18420"/>
    </ligand>
</feature>
<feature type="binding site" evidence="1">
    <location>
        <position position="105"/>
    </location>
    <ligand>
        <name>ADP</name>
        <dbReference type="ChEBI" id="CHEBI:456216"/>
    </ligand>
</feature>
<feature type="binding site" evidence="1">
    <location>
        <position position="106"/>
    </location>
    <ligand>
        <name>ADP</name>
        <dbReference type="ChEBI" id="CHEBI:456216"/>
    </ligand>
</feature>
<feature type="binding site" evidence="1">
    <location>
        <position position="106"/>
    </location>
    <ligand>
        <name>ATP</name>
        <dbReference type="ChEBI" id="CHEBI:30616"/>
    </ligand>
</feature>
<feature type="binding site" evidence="1">
    <location>
        <position position="107"/>
    </location>
    <ligand>
        <name>ADP</name>
        <dbReference type="ChEBI" id="CHEBI:456216"/>
    </ligand>
</feature>
<feature type="binding site" evidence="1">
    <location>
        <position position="107"/>
    </location>
    <ligand>
        <name>ATP</name>
        <dbReference type="ChEBI" id="CHEBI:30616"/>
    </ligand>
</feature>
<feature type="binding site" evidence="1">
    <location>
        <position position="175"/>
    </location>
    <ligand>
        <name>ADP</name>
        <dbReference type="ChEBI" id="CHEBI:456216"/>
    </ligand>
</feature>
<feature type="binding site" evidence="1">
    <location>
        <position position="422"/>
    </location>
    <ligand>
        <name>ADP</name>
        <dbReference type="ChEBI" id="CHEBI:456216"/>
    </ligand>
</feature>
<feature type="binding site" evidence="1">
    <location>
        <position position="422"/>
    </location>
    <ligand>
        <name>ATP</name>
        <dbReference type="ChEBI" id="CHEBI:30616"/>
    </ligand>
</feature>
<feature type="binding site" evidence="1">
    <location>
        <position position="492"/>
    </location>
    <ligand>
        <name>ADP</name>
        <dbReference type="ChEBI" id="CHEBI:456216"/>
    </ligand>
</feature>
<feature type="binding site" evidence="1">
    <location>
        <position position="508"/>
    </location>
    <ligand>
        <name>ADP</name>
        <dbReference type="ChEBI" id="CHEBI:456216"/>
    </ligand>
</feature>
<feature type="binding site" evidence="1">
    <location>
        <position position="513"/>
    </location>
    <ligand>
        <name>ADP</name>
        <dbReference type="ChEBI" id="CHEBI:456216"/>
    </ligand>
</feature>
<feature type="modified residue" description="N-acetylalanine" evidence="1">
    <location>
        <position position="2"/>
    </location>
</feature>
<feature type="modified residue" description="Phosphoserine" evidence="1">
    <location>
        <position position="26"/>
    </location>
</feature>
<feature type="modified residue" description="Phosphoserine" evidence="1">
    <location>
        <position position="346"/>
    </location>
</feature>
<feature type="modified residue" description="Phosphoserine" evidence="1">
    <location>
        <position position="539"/>
    </location>
</feature>
<feature type="cross-link" description="Glycyl lysine isopeptide (Lys-Gly) (interchain with G-Cter in SUMO2)" evidence="1">
    <location>
        <position position="20"/>
    </location>
</feature>
<feature type="cross-link" description="Glycyl lysine isopeptide (Lys-Gly) (interchain with G-Cter in SUMO2)" evidence="1">
    <location>
        <position position="210"/>
    </location>
</feature>
<feature type="cross-link" description="Glycyl lysine isopeptide (Lys-Gly) (interchain with G-Cter in SUMO2)" evidence="1">
    <location>
        <position position="214"/>
    </location>
</feature>
<feature type="cross-link" description="Glycyl lysine isopeptide (Lys-Gly) (interchain with G-Cter in SUMO2)" evidence="1">
    <location>
        <position position="265"/>
    </location>
</feature>
<feature type="cross-link" description="Glycyl lysine isopeptide (Lys-Gly) (interchain with G-Cter in SUMO2)" evidence="1">
    <location>
        <position position="275"/>
    </location>
</feature>
<feature type="cross-link" description="Glycyl lysine isopeptide (Lys-Gly) (interchain with G-Cter in SUMO2)" evidence="1">
    <location>
        <position position="279"/>
    </location>
</feature>
<feature type="cross-link" description="Glycyl lysine isopeptide (Lys-Gly) (interchain with G-Cter in SUMO2)" evidence="1">
    <location>
        <position position="392"/>
    </location>
</feature>
<sequence>MASMGTLAFDEYGRPFLIIKDQDRKSRLMGLEALKSHIMAAKAVANTMRTSLGPNGLDKMMVDKDGDVTVTNDGATILSMMDVDHQIAKLMVELSKSQDDEIGDGTTGVVVLAGALLEEAEQLLDRGIHPIRIADGYEQAARVAIEHLDKISDSVLVDIKDTEPLIQTAKTTLGSKVVNSCHRQMAEIAVNAVLTVADMERRDVDFELIKVEGKVGGRLEDTKLIKGVIVDKDFSHPRMPKKVEDAKIAILTCPFEPPKPKTKHKLDVTSVEDYKALQKYEKEKFEEMIQQIKETGANLAICQWGFDDEANHLLLQNNLPAVRWVGGPEIELIAIATGGRIVPRFSELTAEKLGFAGLVQEISFGTTKDKMLVIEQCKNSRAVTIFIRGGNKMIIEEAKRSLHDALCVIRNLIRDNRVVYGGGAAETSCALAVSQEADKCPTLEQYAMRAFADALEVIPMALSENSGMNPIQTMTEVRARQVKEMNPALGIDCLHKGTNDMKQQHVIETLIGKKQQISLATQMVRMILKIDDIRKPGESEE</sequence>
<protein>
    <recommendedName>
        <fullName>T-complex protein 1 subunit epsilon</fullName>
        <shortName>TCP-1-epsilon</shortName>
        <ecNumber evidence="1">3.6.1.-</ecNumber>
    </recommendedName>
    <alternativeName>
        <fullName>CCT-epsilon</fullName>
    </alternativeName>
</protein>
<reference key="1">
    <citation type="submission" date="2004-11" db="EMBL/GenBank/DDBJ databases">
        <authorList>
            <consortium name="The German cDNA consortium"/>
        </authorList>
    </citation>
    <scope>NUCLEOTIDE SEQUENCE [LARGE SCALE MRNA]</scope>
    <source>
        <tissue>Kidney</tissue>
    </source>
</reference>
<organism>
    <name type="scientific">Pongo abelii</name>
    <name type="common">Sumatran orangutan</name>
    <name type="synonym">Pongo pygmaeus abelii</name>
    <dbReference type="NCBI Taxonomy" id="9601"/>
    <lineage>
        <taxon>Eukaryota</taxon>
        <taxon>Metazoa</taxon>
        <taxon>Chordata</taxon>
        <taxon>Craniata</taxon>
        <taxon>Vertebrata</taxon>
        <taxon>Euteleostomi</taxon>
        <taxon>Mammalia</taxon>
        <taxon>Eutheria</taxon>
        <taxon>Euarchontoglires</taxon>
        <taxon>Primates</taxon>
        <taxon>Haplorrhini</taxon>
        <taxon>Catarrhini</taxon>
        <taxon>Hominidae</taxon>
        <taxon>Pongo</taxon>
    </lineage>
</organism>
<comment type="function">
    <text evidence="1">Component of the chaperonin-containing T-complex (TRiC), a molecular chaperone complex that assists the folding of actin, tubulin and other proteins upon ATP hydrolysis. The TRiC complex mediates the folding of WRAP53/TCAB1, thereby regulating telomere maintenance. As part of the TRiC complex may play a role in the assembly of BBSome, a complex involved in ciliogenesis regulating transports vesicles to the cilia.</text>
</comment>
<comment type="catalytic activity">
    <reaction evidence="1">
        <text>ATP + H2O = ADP + phosphate + H(+)</text>
        <dbReference type="Rhea" id="RHEA:13065"/>
        <dbReference type="ChEBI" id="CHEBI:15377"/>
        <dbReference type="ChEBI" id="CHEBI:15378"/>
        <dbReference type="ChEBI" id="CHEBI:30616"/>
        <dbReference type="ChEBI" id="CHEBI:43474"/>
        <dbReference type="ChEBI" id="CHEBI:456216"/>
    </reaction>
</comment>
<comment type="subunit">
    <text evidence="1 2">Component of the chaperonin-containing T-complex (TRiC), a hexadecamer composed of two identical back-to-back stacked rings enclosing a protein folding chamber. Each ring is made up of eight different subunits: TCP1/CCT1, CCT2, CCT3, CCT4, CCT5, CCT6A/CCT6, CCT7, CCT8. Interacts with PACRG (By similarity). Interacts with DNAAF4 (By similarity). Interacts with DLEC1 (By similarity). Interacts with SPMAP2 (By similarity).</text>
</comment>
<comment type="subcellular location">
    <subcellularLocation>
        <location evidence="1">Cytoplasm</location>
    </subcellularLocation>
    <subcellularLocation>
        <location evidence="1">Cytoplasm</location>
        <location evidence="1">Cytoskeleton</location>
        <location evidence="1">Microtubule organizing center</location>
        <location evidence="1">Centrosome</location>
    </subcellularLocation>
</comment>
<comment type="PTM">
    <text evidence="1">Ubiquitinated by the DCX(DCAF12) complex specifically recognizes the diglutamate (Glu-Glu) at the C-terminus, leading to its degradation.</text>
</comment>
<comment type="similarity">
    <text evidence="3">Belongs to the TCP-1 chaperonin family.</text>
</comment>
<name>TCPE_PONAB</name>
<evidence type="ECO:0000250" key="1">
    <source>
        <dbReference type="UniProtKB" id="P48643"/>
    </source>
</evidence>
<evidence type="ECO:0000250" key="2">
    <source>
        <dbReference type="UniProtKB" id="P80316"/>
    </source>
</evidence>
<evidence type="ECO:0000305" key="3"/>
<gene>
    <name type="primary">CCT5</name>
</gene>
<dbReference type="EC" id="3.6.1.-" evidence="1"/>
<dbReference type="EMBL" id="CR857360">
    <property type="protein sequence ID" value="CAH89655.1"/>
    <property type="molecule type" value="mRNA"/>
</dbReference>
<dbReference type="SMR" id="Q5RF02"/>
<dbReference type="FunCoup" id="Q5RF02">
    <property type="interactions" value="3785"/>
</dbReference>
<dbReference type="STRING" id="9601.ENSPPYP00000017138"/>
<dbReference type="eggNOG" id="KOG0357">
    <property type="taxonomic scope" value="Eukaryota"/>
</dbReference>
<dbReference type="InParanoid" id="Q5RF02"/>
<dbReference type="Proteomes" id="UP000001595">
    <property type="component" value="Unplaced"/>
</dbReference>
<dbReference type="GO" id="GO:0005813">
    <property type="term" value="C:centrosome"/>
    <property type="evidence" value="ECO:0007669"/>
    <property type="project" value="UniProtKB-SubCell"/>
</dbReference>
<dbReference type="GO" id="GO:0005832">
    <property type="term" value="C:chaperonin-containing T-complex"/>
    <property type="evidence" value="ECO:0000250"/>
    <property type="project" value="UniProtKB"/>
</dbReference>
<dbReference type="GO" id="GO:0005874">
    <property type="term" value="C:microtubule"/>
    <property type="evidence" value="ECO:0007669"/>
    <property type="project" value="UniProtKB-ARBA"/>
</dbReference>
<dbReference type="GO" id="GO:0005524">
    <property type="term" value="F:ATP binding"/>
    <property type="evidence" value="ECO:0007669"/>
    <property type="project" value="UniProtKB-KW"/>
</dbReference>
<dbReference type="GO" id="GO:0016887">
    <property type="term" value="F:ATP hydrolysis activity"/>
    <property type="evidence" value="ECO:0007669"/>
    <property type="project" value="InterPro"/>
</dbReference>
<dbReference type="GO" id="GO:0140662">
    <property type="term" value="F:ATP-dependent protein folding chaperone"/>
    <property type="evidence" value="ECO:0007669"/>
    <property type="project" value="InterPro"/>
</dbReference>
<dbReference type="GO" id="GO:0031681">
    <property type="term" value="F:G-protein beta-subunit binding"/>
    <property type="evidence" value="ECO:0000250"/>
    <property type="project" value="CAFA"/>
</dbReference>
<dbReference type="GO" id="GO:0051082">
    <property type="term" value="F:unfolded protein binding"/>
    <property type="evidence" value="ECO:0007669"/>
    <property type="project" value="InterPro"/>
</dbReference>
<dbReference type="GO" id="GO:0032212">
    <property type="term" value="P:positive regulation of telomere maintenance via telomerase"/>
    <property type="evidence" value="ECO:0007669"/>
    <property type="project" value="UniProtKB-ARBA"/>
</dbReference>
<dbReference type="GO" id="GO:0050821">
    <property type="term" value="P:protein stabilization"/>
    <property type="evidence" value="ECO:0007669"/>
    <property type="project" value="UniProtKB-ARBA"/>
</dbReference>
<dbReference type="CDD" id="cd03339">
    <property type="entry name" value="TCP1_epsilon"/>
    <property type="match status" value="1"/>
</dbReference>
<dbReference type="FunFam" id="1.10.560.10:FF:000053">
    <property type="entry name" value="T-complex protein 1 subunit delta"/>
    <property type="match status" value="1"/>
</dbReference>
<dbReference type="FunFam" id="3.30.260.10:FF:000028">
    <property type="entry name" value="T-complex protein 1 subunit epsilon"/>
    <property type="match status" value="1"/>
</dbReference>
<dbReference type="FunFam" id="3.50.7.10:FF:000003">
    <property type="entry name" value="T-complex protein 1 subunit epsilon"/>
    <property type="match status" value="1"/>
</dbReference>
<dbReference type="FunFam" id="1.10.560.10:FF:000049">
    <property type="entry name" value="T-complex protein 1 subunitTheta, putative"/>
    <property type="match status" value="1"/>
</dbReference>
<dbReference type="Gene3D" id="3.50.7.10">
    <property type="entry name" value="GroEL"/>
    <property type="match status" value="1"/>
</dbReference>
<dbReference type="Gene3D" id="1.10.560.10">
    <property type="entry name" value="GroEL-like equatorial domain"/>
    <property type="match status" value="1"/>
</dbReference>
<dbReference type="Gene3D" id="3.30.260.10">
    <property type="entry name" value="TCP-1-like chaperonin intermediate domain"/>
    <property type="match status" value="1"/>
</dbReference>
<dbReference type="InterPro" id="IPR012718">
    <property type="entry name" value="Chap_CCT_epsi"/>
</dbReference>
<dbReference type="InterPro" id="IPR017998">
    <property type="entry name" value="Chaperone_TCP-1"/>
</dbReference>
<dbReference type="InterPro" id="IPR002194">
    <property type="entry name" value="Chaperonin_TCP-1_CS"/>
</dbReference>
<dbReference type="InterPro" id="IPR002423">
    <property type="entry name" value="Cpn60/GroEL/TCP-1"/>
</dbReference>
<dbReference type="InterPro" id="IPR027409">
    <property type="entry name" value="GroEL-like_apical_dom_sf"/>
</dbReference>
<dbReference type="InterPro" id="IPR027413">
    <property type="entry name" value="GROEL-like_equatorial_sf"/>
</dbReference>
<dbReference type="InterPro" id="IPR027410">
    <property type="entry name" value="TCP-1-like_intermed_sf"/>
</dbReference>
<dbReference type="InterPro" id="IPR053374">
    <property type="entry name" value="TCP-1_chaperonin"/>
</dbReference>
<dbReference type="InterPro" id="IPR054827">
    <property type="entry name" value="thermosome_alpha"/>
</dbReference>
<dbReference type="NCBIfam" id="TIGR02343">
    <property type="entry name" value="chap_CCT_epsi"/>
    <property type="match status" value="1"/>
</dbReference>
<dbReference type="NCBIfam" id="NF041082">
    <property type="entry name" value="thermosome_alpha"/>
    <property type="match status" value="1"/>
</dbReference>
<dbReference type="NCBIfam" id="NF041083">
    <property type="entry name" value="thermosome_beta"/>
    <property type="match status" value="1"/>
</dbReference>
<dbReference type="PANTHER" id="PTHR11353">
    <property type="entry name" value="CHAPERONIN"/>
    <property type="match status" value="1"/>
</dbReference>
<dbReference type="Pfam" id="PF00118">
    <property type="entry name" value="Cpn60_TCP1"/>
    <property type="match status" value="1"/>
</dbReference>
<dbReference type="PRINTS" id="PR00304">
    <property type="entry name" value="TCOMPLEXTCP1"/>
</dbReference>
<dbReference type="SUPFAM" id="SSF52029">
    <property type="entry name" value="GroEL apical domain-like"/>
    <property type="match status" value="1"/>
</dbReference>
<dbReference type="SUPFAM" id="SSF48592">
    <property type="entry name" value="GroEL equatorial domain-like"/>
    <property type="match status" value="1"/>
</dbReference>
<dbReference type="SUPFAM" id="SSF54849">
    <property type="entry name" value="GroEL-intermediate domain like"/>
    <property type="match status" value="1"/>
</dbReference>
<dbReference type="PROSITE" id="PS00750">
    <property type="entry name" value="TCP1_1"/>
    <property type="match status" value="1"/>
</dbReference>
<dbReference type="PROSITE" id="PS00751">
    <property type="entry name" value="TCP1_2"/>
    <property type="match status" value="1"/>
</dbReference>
<dbReference type="PROSITE" id="PS00995">
    <property type="entry name" value="TCP1_3"/>
    <property type="match status" value="1"/>
</dbReference>
<keyword id="KW-0007">Acetylation</keyword>
<keyword id="KW-0067">ATP-binding</keyword>
<keyword id="KW-0143">Chaperone</keyword>
<keyword id="KW-0963">Cytoplasm</keyword>
<keyword id="KW-0206">Cytoskeleton</keyword>
<keyword id="KW-0378">Hydrolase</keyword>
<keyword id="KW-1017">Isopeptide bond</keyword>
<keyword id="KW-0460">Magnesium</keyword>
<keyword id="KW-0479">Metal-binding</keyword>
<keyword id="KW-0547">Nucleotide-binding</keyword>
<keyword id="KW-0597">Phosphoprotein</keyword>
<keyword id="KW-1185">Reference proteome</keyword>
<keyword id="KW-0832">Ubl conjugation</keyword>
<proteinExistence type="evidence at transcript level"/>
<accession>Q5RF02</accession>